<reference key="1">
    <citation type="patent" date="1997-02-04" number="US5599559">
        <title>Calcium channel blocking polypeptide from agelenopsis aperta and therapeutic methods employing it.</title>
        <authorList>
            <person name="Phillips D."/>
            <person name="Kelly M.E."/>
            <person name="Saccomano N.A."/>
            <person name="Volkmann R.A."/>
        </authorList>
    </citation>
    <scope>PROTEIN SEQUENCE</scope>
    <scope>FUNCTION</scope>
    <scope>SUBCELLULAR LOCATION</scope>
    <scope>MASS SPECTROMETRY</scope>
    <source>
        <tissue>Venom</tissue>
    </source>
</reference>
<evidence type="ECO:0000250" key="1">
    <source>
        <dbReference type="UniProtKB" id="P30288"/>
    </source>
</evidence>
<evidence type="ECO:0000269" key="2">
    <source ref="1"/>
</evidence>
<evidence type="ECO:0000303" key="3">
    <source ref="1"/>
</evidence>
<evidence type="ECO:0000305" key="4"/>
<evidence type="ECO:0000305" key="5">
    <source ref="1"/>
</evidence>
<dbReference type="SMR" id="P0DL48"/>
<dbReference type="GO" id="GO:0005576">
    <property type="term" value="C:extracellular region"/>
    <property type="evidence" value="ECO:0007669"/>
    <property type="project" value="UniProtKB-SubCell"/>
</dbReference>
<dbReference type="GO" id="GO:0005246">
    <property type="term" value="F:calcium channel regulator activity"/>
    <property type="evidence" value="ECO:0007669"/>
    <property type="project" value="UniProtKB-KW"/>
</dbReference>
<dbReference type="GO" id="GO:0008200">
    <property type="term" value="F:ion channel inhibitor activity"/>
    <property type="evidence" value="ECO:0007669"/>
    <property type="project" value="InterPro"/>
</dbReference>
<dbReference type="GO" id="GO:0090729">
    <property type="term" value="F:toxin activity"/>
    <property type="evidence" value="ECO:0007669"/>
    <property type="project" value="UniProtKB-KW"/>
</dbReference>
<dbReference type="Gene3D" id="4.10.40.10">
    <property type="match status" value="1"/>
</dbReference>
<dbReference type="InterPro" id="IPR004169">
    <property type="entry name" value="Spidertoxin"/>
</dbReference>
<dbReference type="Pfam" id="PF02819">
    <property type="entry name" value="Toxin_9"/>
    <property type="match status" value="1"/>
</dbReference>
<dbReference type="SUPFAM" id="SSF57059">
    <property type="entry name" value="omega toxin-like"/>
    <property type="match status" value="1"/>
</dbReference>
<keyword id="KW-0108">Calcium channel impairing toxin</keyword>
<keyword id="KW-0903">Direct protein sequencing</keyword>
<keyword id="KW-1015">Disulfide bond</keyword>
<keyword id="KW-0872">Ion channel impairing toxin</keyword>
<keyword id="KW-0960">Knottin</keyword>
<keyword id="KW-0528">Neurotoxin</keyword>
<keyword id="KW-0964">Secreted</keyword>
<keyword id="KW-0800">Toxin</keyword>
<keyword id="KW-1218">Voltage-gated calcium channel impairing toxin</keyword>
<organism>
    <name type="scientific">Agelenopsis aperta</name>
    <name type="common">North American funnel-web spider</name>
    <name type="synonym">Agelenopsis gertschi</name>
    <dbReference type="NCBI Taxonomy" id="6908"/>
    <lineage>
        <taxon>Eukaryota</taxon>
        <taxon>Metazoa</taxon>
        <taxon>Ecdysozoa</taxon>
        <taxon>Arthropoda</taxon>
        <taxon>Chelicerata</taxon>
        <taxon>Arachnida</taxon>
        <taxon>Araneae</taxon>
        <taxon>Araneomorphae</taxon>
        <taxon>Entelegynae</taxon>
        <taxon>Agelenidae</taxon>
        <taxon>Agelenopsis</taxon>
    </lineage>
</organism>
<name>TX20A_AGEAP</name>
<sequence>EACAGAYKSCDKVKCCHDRRCRCNIAMDNCVCKLFYCELFGTCDRLKP</sequence>
<comment type="function">
    <text evidence="2">The toxin blocks voltage-gated calcium channels in rat cerebellar granule cells (IC(50)=200 nM).</text>
</comment>
<comment type="subcellular location">
    <subcellularLocation>
        <location evidence="2">Secreted</location>
    </subcellularLocation>
</comment>
<comment type="tissue specificity">
    <text evidence="5">Expressed by the venom gland.</text>
</comment>
<comment type="domain">
    <text evidence="1">The presence of a 'disulfide through disulfide knot' structurally defines this protein as a knottin.</text>
</comment>
<comment type="mass spectrometry">
    <text>Average mass.</text>
</comment>
<comment type="similarity">
    <text evidence="4">Belongs to the neurotoxin 02 (plectoxin) family.</text>
</comment>
<feature type="chain" id="PRO_0000433343" description="Omega-agatoxin-Aa5a" evidence="2">
    <location>
        <begin position="1"/>
        <end position="48"/>
    </location>
</feature>
<feature type="disulfide bond" evidence="1">
    <location>
        <begin position="3"/>
        <end position="16"/>
    </location>
</feature>
<feature type="disulfide bond" evidence="1">
    <location>
        <begin position="10"/>
        <end position="21"/>
    </location>
</feature>
<feature type="disulfide bond" evidence="1">
    <location>
        <begin position="15"/>
        <end position="32"/>
    </location>
</feature>
<feature type="disulfide bond" evidence="1">
    <location>
        <begin position="23"/>
        <end position="30"/>
    </location>
</feature>
<protein>
    <recommendedName>
        <fullName evidence="4">Omega-agatoxin-Aa5a</fullName>
        <shortName evidence="4">Omega-AGTX-Aa5a</shortName>
    </recommendedName>
    <alternativeName>
        <fullName evidence="3">Peptide J2</fullName>
    </alternativeName>
</protein>
<accession>P0DL48</accession>
<proteinExistence type="evidence at protein level"/>